<accession>P0CS38</accession>
<accession>Q55N02</accession>
<accession>Q5KBD1</accession>
<accession>Q5KBD2</accession>
<organism>
    <name type="scientific">Cryptococcus neoformans var. neoformans serotype D (strain JEC21 / ATCC MYA-565)</name>
    <name type="common">Filobasidiella neoformans</name>
    <dbReference type="NCBI Taxonomy" id="214684"/>
    <lineage>
        <taxon>Eukaryota</taxon>
        <taxon>Fungi</taxon>
        <taxon>Dikarya</taxon>
        <taxon>Basidiomycota</taxon>
        <taxon>Agaricomycotina</taxon>
        <taxon>Tremellomycetes</taxon>
        <taxon>Tremellales</taxon>
        <taxon>Cryptococcaceae</taxon>
        <taxon>Cryptococcus</taxon>
        <taxon>Cryptococcus neoformans species complex</taxon>
    </lineage>
</organism>
<sequence length="881" mass="96315">MKVTKPNWVEHTVGEKKAKTAIYSISVHPDGTRLATGGLDHKVKIWSTLPILDVEAEKEEENPKLLCTMSSHTGSVLSVRWAHHGRFLATGSDDQVIMIWGLDPDGGGRLWGSDEINVENWKALTRLVGHVADVVDLAWSRDDTMLASVGLDSTVWIWDGLTFERLRKLDLHQGFVKGVCWDPVGNYLATQSDDKTVKIWNTEDWSLAETISKPFETSPQSTFFRRLSWSPDGAFIAASNAMNGPVFVAAVIDREGWASDISFVGHENTIQVAAFNPRLFFPEGEPKGRATASSMLALGANDFSISIWRNTLYKPLVVLKDIFGADLMDLCWSNDGYVLYGSSVDGSVCAIQFEPSEFTDLADFSATELVLREYDYKPKRAHQPLAVHSSAASITNGFGPSTTTSTHVNVLQPKKGKAKRRVDLSNGNINAGPSAGPSRQALRPPPPVDPFSGPIQGFASPSTAQASTARMFEDAHRAFGPGSGSISGTSPRAGDKRKASGSYEDPTRGVRGRGMPVQQPIQQFEVQIIRAPMVAPSPSDAGPSKAYLPYPQVQSILRAQAIGNESRSIYLEARNTSDPKGENVLCYFADGEQRWMDYLPKAALAVTVTKNFCAAACEDGSLRVYSPAGRLILNMKLSGLVYDLQGEDKMLLIITMDCQVRVINVRNGKAFSPPSSIHHLLFPGSSSFHSFDIISCTVRPNGVPVIITSEPQAFAYDASLHEWSTIASPPIAGIQPLPSGPSGPLSVVDQIVAKSAPVTTTEKSNAPWIEESYVMSQFEMKLRGTVLLDSKEEHKHWLLGYMKYLGDENFAERAGEVMKDLIGPVYHQSKPTGWEPKLLGVDKREIAAEVLDVLSKTLQGKNVASVWYDVLDKMKADEGSW</sequence>
<comment type="function">
    <text evidence="1">Required for replication-independent chromatin assembly and for the periodic repression of histone gene transcription during the cell cycle.</text>
</comment>
<comment type="subcellular location">
    <subcellularLocation>
        <location evidence="1">Nucleus</location>
    </subcellularLocation>
</comment>
<comment type="alternative products">
    <event type="alternative splicing"/>
    <isoform>
        <id>P0CS38-1</id>
        <name>1</name>
        <sequence type="displayed"/>
    </isoform>
    <isoform>
        <id>P0CS38-2</id>
        <name>2</name>
        <sequence type="described" ref="VSP_025047 VSP_025048"/>
    </isoform>
</comment>
<comment type="similarity">
    <text evidence="3">Belongs to the WD repeat HIR1 family.</text>
</comment>
<gene>
    <name type="primary">HIR1</name>
    <name type="ordered locus">CNI02950</name>
</gene>
<proteinExistence type="inferred from homology"/>
<reference key="1">
    <citation type="journal article" date="2005" name="Science">
        <title>The genome of the basidiomycetous yeast and human pathogen Cryptococcus neoformans.</title>
        <authorList>
            <person name="Loftus B.J."/>
            <person name="Fung E."/>
            <person name="Roncaglia P."/>
            <person name="Rowley D."/>
            <person name="Amedeo P."/>
            <person name="Bruno D."/>
            <person name="Vamathevan J."/>
            <person name="Miranda M."/>
            <person name="Anderson I.J."/>
            <person name="Fraser J.A."/>
            <person name="Allen J.E."/>
            <person name="Bosdet I.E."/>
            <person name="Brent M.R."/>
            <person name="Chiu R."/>
            <person name="Doering T.L."/>
            <person name="Donlin M.J."/>
            <person name="D'Souza C.A."/>
            <person name="Fox D.S."/>
            <person name="Grinberg V."/>
            <person name="Fu J."/>
            <person name="Fukushima M."/>
            <person name="Haas B.J."/>
            <person name="Huang J.C."/>
            <person name="Janbon G."/>
            <person name="Jones S.J.M."/>
            <person name="Koo H.L."/>
            <person name="Krzywinski M.I."/>
            <person name="Kwon-Chung K.J."/>
            <person name="Lengeler K.B."/>
            <person name="Maiti R."/>
            <person name="Marra M.A."/>
            <person name="Marra R.E."/>
            <person name="Mathewson C.A."/>
            <person name="Mitchell T.G."/>
            <person name="Pertea M."/>
            <person name="Riggs F.R."/>
            <person name="Salzberg S.L."/>
            <person name="Schein J.E."/>
            <person name="Shvartsbeyn A."/>
            <person name="Shin H."/>
            <person name="Shumway M."/>
            <person name="Specht C.A."/>
            <person name="Suh B.B."/>
            <person name="Tenney A."/>
            <person name="Utterback T.R."/>
            <person name="Wickes B.L."/>
            <person name="Wortman J.R."/>
            <person name="Wye N.H."/>
            <person name="Kronstad J.W."/>
            <person name="Lodge J.K."/>
            <person name="Heitman J."/>
            <person name="Davis R.W."/>
            <person name="Fraser C.M."/>
            <person name="Hyman R.W."/>
        </authorList>
    </citation>
    <scope>NUCLEOTIDE SEQUENCE [LARGE SCALE GENOMIC DNA]</scope>
    <source>
        <strain>JEC21 / ATCC MYA-565</strain>
    </source>
</reference>
<evidence type="ECO:0000250" key="1"/>
<evidence type="ECO:0000256" key="2">
    <source>
        <dbReference type="SAM" id="MobiDB-lite"/>
    </source>
</evidence>
<evidence type="ECO:0000305" key="3"/>
<dbReference type="EMBL" id="AE017349">
    <property type="protein sequence ID" value="AAW45342.1"/>
    <property type="molecule type" value="Genomic_DNA"/>
</dbReference>
<dbReference type="EMBL" id="AE017349">
    <property type="protein sequence ID" value="AAW45343.1"/>
    <property type="molecule type" value="Genomic_DNA"/>
</dbReference>
<dbReference type="RefSeq" id="XP_572649.1">
    <molecule id="P0CS38-2"/>
    <property type="nucleotide sequence ID" value="XM_572649.1"/>
</dbReference>
<dbReference type="RefSeq" id="XP_572650.1">
    <molecule id="P0CS38-1"/>
    <property type="nucleotide sequence ID" value="XM_572650.1"/>
</dbReference>
<dbReference type="SMR" id="P0CS38"/>
<dbReference type="FunCoup" id="P0CS38">
    <property type="interactions" value="358"/>
</dbReference>
<dbReference type="STRING" id="214684.P0CS38"/>
<dbReference type="PaxDb" id="214684-P0CS38"/>
<dbReference type="EnsemblFungi" id="AAW45342">
    <molecule id="P0CS38-2"/>
    <property type="protein sequence ID" value="AAW45342"/>
    <property type="gene ID" value="CNI02950"/>
</dbReference>
<dbReference type="EnsemblFungi" id="AAW45343">
    <molecule id="P0CS38-1"/>
    <property type="protein sequence ID" value="AAW45343"/>
    <property type="gene ID" value="CNI02950"/>
</dbReference>
<dbReference type="GeneID" id="3259556"/>
<dbReference type="KEGG" id="cne:CNI02950"/>
<dbReference type="VEuPathDB" id="FungiDB:CNI02950"/>
<dbReference type="eggNOG" id="KOG0973">
    <property type="taxonomic scope" value="Eukaryota"/>
</dbReference>
<dbReference type="InParanoid" id="P0CS38"/>
<dbReference type="OMA" id="WVTHDGY"/>
<dbReference type="OrthoDB" id="1741719at2759"/>
<dbReference type="Proteomes" id="UP000002149">
    <property type="component" value="Chromosome 9"/>
</dbReference>
<dbReference type="GO" id="GO:0000785">
    <property type="term" value="C:chromatin"/>
    <property type="evidence" value="ECO:0000318"/>
    <property type="project" value="GO_Central"/>
</dbReference>
<dbReference type="GO" id="GO:0000417">
    <property type="term" value="C:HIR complex"/>
    <property type="evidence" value="ECO:0000318"/>
    <property type="project" value="GO_Central"/>
</dbReference>
<dbReference type="GO" id="GO:0005634">
    <property type="term" value="C:nucleus"/>
    <property type="evidence" value="ECO:0007669"/>
    <property type="project" value="UniProtKB-SubCell"/>
</dbReference>
<dbReference type="GO" id="GO:0006338">
    <property type="term" value="P:chromatin remodeling"/>
    <property type="evidence" value="ECO:0000318"/>
    <property type="project" value="GO_Central"/>
</dbReference>
<dbReference type="GO" id="GO:0006351">
    <property type="term" value="P:DNA-templated transcription"/>
    <property type="evidence" value="ECO:0007669"/>
    <property type="project" value="InterPro"/>
</dbReference>
<dbReference type="GO" id="GO:0006355">
    <property type="term" value="P:regulation of DNA-templated transcription"/>
    <property type="evidence" value="ECO:0007669"/>
    <property type="project" value="InterPro"/>
</dbReference>
<dbReference type="CDD" id="cd00200">
    <property type="entry name" value="WD40"/>
    <property type="match status" value="1"/>
</dbReference>
<dbReference type="FunFam" id="2.130.10.10:FF:000701">
    <property type="entry name" value="Protein HIR"/>
    <property type="match status" value="1"/>
</dbReference>
<dbReference type="FunFam" id="2.130.10.10:FF:000921">
    <property type="entry name" value="Protein HIR"/>
    <property type="match status" value="1"/>
</dbReference>
<dbReference type="Gene3D" id="2.130.10.10">
    <property type="entry name" value="YVTN repeat-like/Quinoprotein amine dehydrogenase"/>
    <property type="match status" value="2"/>
</dbReference>
<dbReference type="InterPro" id="IPR055410">
    <property type="entry name" value="CAF1B_HIR1_beta-prop"/>
</dbReference>
<dbReference type="InterPro" id="IPR031120">
    <property type="entry name" value="HIR1-like"/>
</dbReference>
<dbReference type="InterPro" id="IPR011494">
    <property type="entry name" value="HIRA-like_C"/>
</dbReference>
<dbReference type="InterPro" id="IPR015943">
    <property type="entry name" value="WD40/YVTN_repeat-like_dom_sf"/>
</dbReference>
<dbReference type="InterPro" id="IPR036322">
    <property type="entry name" value="WD40_repeat_dom_sf"/>
</dbReference>
<dbReference type="InterPro" id="IPR001680">
    <property type="entry name" value="WD40_rpt"/>
</dbReference>
<dbReference type="PANTHER" id="PTHR13831">
    <property type="entry name" value="MEMBER OF THE HIR1 FAMILY OF WD-REPEAT PROTEINS"/>
    <property type="match status" value="1"/>
</dbReference>
<dbReference type="PANTHER" id="PTHR13831:SF0">
    <property type="entry name" value="PROTEIN HIRA"/>
    <property type="match status" value="1"/>
</dbReference>
<dbReference type="Pfam" id="PF24105">
    <property type="entry name" value="Beta-prop_CAF1B_HIR1"/>
    <property type="match status" value="1"/>
</dbReference>
<dbReference type="Pfam" id="PF07569">
    <property type="entry name" value="Hira"/>
    <property type="match status" value="1"/>
</dbReference>
<dbReference type="SMART" id="SM00320">
    <property type="entry name" value="WD40"/>
    <property type="match status" value="7"/>
</dbReference>
<dbReference type="SUPFAM" id="SSF50978">
    <property type="entry name" value="WD40 repeat-like"/>
    <property type="match status" value="2"/>
</dbReference>
<dbReference type="PROSITE" id="PS00678">
    <property type="entry name" value="WD_REPEATS_1"/>
    <property type="match status" value="1"/>
</dbReference>
<dbReference type="PROSITE" id="PS50082">
    <property type="entry name" value="WD_REPEATS_2"/>
    <property type="match status" value="4"/>
</dbReference>
<dbReference type="PROSITE" id="PS50294">
    <property type="entry name" value="WD_REPEATS_REGION"/>
    <property type="match status" value="1"/>
</dbReference>
<name>HIR1_CRYNJ</name>
<keyword id="KW-0025">Alternative splicing</keyword>
<keyword id="KW-0156">Chromatin regulator</keyword>
<keyword id="KW-0539">Nucleus</keyword>
<keyword id="KW-1185">Reference proteome</keyword>
<keyword id="KW-0677">Repeat</keyword>
<keyword id="KW-0678">Repressor</keyword>
<keyword id="KW-0804">Transcription</keyword>
<keyword id="KW-0805">Transcription regulation</keyword>
<keyword id="KW-0853">WD repeat</keyword>
<protein>
    <recommendedName>
        <fullName>Protein HIR1</fullName>
    </recommendedName>
</protein>
<feature type="chain" id="PRO_0000286409" description="Protein HIR1">
    <location>
        <begin position="1"/>
        <end position="881"/>
    </location>
</feature>
<feature type="repeat" description="WD 1">
    <location>
        <begin position="17"/>
        <end position="56"/>
    </location>
</feature>
<feature type="repeat" description="WD 2">
    <location>
        <begin position="71"/>
        <end position="110"/>
    </location>
</feature>
<feature type="repeat" description="WD 3">
    <location>
        <begin position="129"/>
        <end position="168"/>
    </location>
</feature>
<feature type="repeat" description="WD 4">
    <location>
        <begin position="171"/>
        <end position="210"/>
    </location>
</feature>
<feature type="repeat" description="WD 5">
    <location>
        <begin position="219"/>
        <end position="262"/>
    </location>
</feature>
<feature type="repeat" description="WD 6">
    <location>
        <begin position="265"/>
        <end position="318"/>
    </location>
</feature>
<feature type="repeat" description="WD 7">
    <location>
        <begin position="322"/>
        <end position="363"/>
    </location>
</feature>
<feature type="repeat" description="WD 8">
    <location>
        <begin position="588"/>
        <end position="635"/>
    </location>
</feature>
<feature type="repeat" description="WD 9">
    <location>
        <begin position="688"/>
        <end position="733"/>
    </location>
</feature>
<feature type="region of interest" description="Disordered" evidence="2">
    <location>
        <begin position="398"/>
        <end position="514"/>
    </location>
</feature>
<feature type="compositionally biased region" description="Polar residues" evidence="2">
    <location>
        <begin position="398"/>
        <end position="409"/>
    </location>
</feature>
<feature type="compositionally biased region" description="Polar residues" evidence="2">
    <location>
        <begin position="459"/>
        <end position="468"/>
    </location>
</feature>
<feature type="splice variant" id="VSP_025047" description="In isoform 2." evidence="3">
    <original>H</original>
    <variation>Q</variation>
    <location>
        <position position="827"/>
    </location>
</feature>
<feature type="splice variant" id="VSP_025048" description="In isoform 2." evidence="3">
    <location>
        <begin position="828"/>
        <end position="881"/>
    </location>
</feature>